<feature type="chain" id="PRO_0000202362" description="Uncharacterized protein TP_0955">
    <location>
        <begin position="1"/>
        <end position="90"/>
    </location>
</feature>
<organism>
    <name type="scientific">Treponema pallidum (strain Nichols)</name>
    <dbReference type="NCBI Taxonomy" id="243276"/>
    <lineage>
        <taxon>Bacteria</taxon>
        <taxon>Pseudomonadati</taxon>
        <taxon>Spirochaetota</taxon>
        <taxon>Spirochaetia</taxon>
        <taxon>Spirochaetales</taxon>
        <taxon>Treponemataceae</taxon>
        <taxon>Treponema</taxon>
    </lineage>
</organism>
<name>Y955_TREPA</name>
<dbReference type="EMBL" id="AE000520">
    <property type="protein sequence ID" value="AAC65911.1"/>
    <property type="molecule type" value="Genomic_DNA"/>
</dbReference>
<dbReference type="PIR" id="A71262">
    <property type="entry name" value="A71262"/>
</dbReference>
<dbReference type="IntAct" id="O83921">
    <property type="interactions" value="1"/>
</dbReference>
<dbReference type="STRING" id="243276.TP_0955"/>
<dbReference type="EnsemblBacteria" id="AAC65911">
    <property type="protein sequence ID" value="AAC65911"/>
    <property type="gene ID" value="TP_0955"/>
</dbReference>
<dbReference type="KEGG" id="tpa:TP_0955"/>
<dbReference type="KEGG" id="tpw:TPANIC_0955"/>
<dbReference type="HOGENOM" id="CLU_2439902_0_0_12"/>
<dbReference type="Proteomes" id="UP000000811">
    <property type="component" value="Chromosome"/>
</dbReference>
<keyword id="KW-1185">Reference proteome</keyword>
<protein>
    <recommendedName>
        <fullName>Uncharacterized protein TP_0955</fullName>
    </recommendedName>
</protein>
<accession>O83921</accession>
<proteinExistence type="predicted"/>
<sequence length="90" mass="10661">MTGVPTPILIIPIHEIKSFQNRLDIRDAARWIALATVLERAQFFLKNFTIFELFPGLPARHRRKHKLIFPLRSRAWLLWGSSRKVPLRFK</sequence>
<reference key="1">
    <citation type="journal article" date="1998" name="Science">
        <title>Complete genome sequence of Treponema pallidum, the syphilis spirochete.</title>
        <authorList>
            <person name="Fraser C.M."/>
            <person name="Norris S.J."/>
            <person name="Weinstock G.M."/>
            <person name="White O."/>
            <person name="Sutton G.G."/>
            <person name="Dodson R.J."/>
            <person name="Gwinn M.L."/>
            <person name="Hickey E.K."/>
            <person name="Clayton R.A."/>
            <person name="Ketchum K.A."/>
            <person name="Sodergren E."/>
            <person name="Hardham J.M."/>
            <person name="McLeod M.P."/>
            <person name="Salzberg S.L."/>
            <person name="Peterson J.D."/>
            <person name="Khalak H.G."/>
            <person name="Richardson D.L."/>
            <person name="Howell J.K."/>
            <person name="Chidambaram M."/>
            <person name="Utterback T.R."/>
            <person name="McDonald L.A."/>
            <person name="Artiach P."/>
            <person name="Bowman C."/>
            <person name="Cotton M.D."/>
            <person name="Fujii C."/>
            <person name="Garland S.A."/>
            <person name="Hatch B."/>
            <person name="Horst K."/>
            <person name="Roberts K.M."/>
            <person name="Sandusky M."/>
            <person name="Weidman J.F."/>
            <person name="Smith H.O."/>
            <person name="Venter J.C."/>
        </authorList>
    </citation>
    <scope>NUCLEOTIDE SEQUENCE [LARGE SCALE GENOMIC DNA]</scope>
    <source>
        <strain>Nichols</strain>
    </source>
</reference>
<gene>
    <name type="ordered locus">TP_0955</name>
</gene>